<proteinExistence type="inferred from homology"/>
<organism>
    <name type="scientific">Coxiella burnetii (strain RSA 493 / Nine Mile phase I)</name>
    <dbReference type="NCBI Taxonomy" id="227377"/>
    <lineage>
        <taxon>Bacteria</taxon>
        <taxon>Pseudomonadati</taxon>
        <taxon>Pseudomonadota</taxon>
        <taxon>Gammaproteobacteria</taxon>
        <taxon>Legionellales</taxon>
        <taxon>Coxiellaceae</taxon>
        <taxon>Coxiella</taxon>
    </lineage>
</organism>
<feature type="chain" id="PRO_0000168759" description="Replication-associated recombination protein A">
    <location>
        <begin position="1"/>
        <end position="440"/>
    </location>
</feature>
<feature type="binding site" evidence="1">
    <location>
        <begin position="51"/>
        <end position="58"/>
    </location>
    <ligand>
        <name>ATP</name>
        <dbReference type="ChEBI" id="CHEBI:30616"/>
    </ligand>
</feature>
<feature type="sequence conflict" description="In Ref. 1." evidence="2" ref="1">
    <original>R</original>
    <variation>RVERAER</variation>
    <location>
        <position position="94"/>
    </location>
</feature>
<protein>
    <recommendedName>
        <fullName>Replication-associated recombination protein A</fullName>
    </recommendedName>
</protein>
<reference key="1">
    <citation type="thesis" date="1994" institute="Justus Liebig University / Frankfurt" country="Germany">
        <authorList>
            <person name="Oswald W."/>
        </authorList>
    </citation>
    <scope>NUCLEOTIDE SEQUENCE [GENOMIC DNA]</scope>
</reference>
<reference key="2">
    <citation type="journal article" date="2003" name="Proc. Natl. Acad. Sci. U.S.A.">
        <title>Complete genome sequence of the Q-fever pathogen, Coxiella burnetii.</title>
        <authorList>
            <person name="Seshadri R."/>
            <person name="Paulsen I.T."/>
            <person name="Eisen J.A."/>
            <person name="Read T.D."/>
            <person name="Nelson K.E."/>
            <person name="Nelson W.C."/>
            <person name="Ward N.L."/>
            <person name="Tettelin H."/>
            <person name="Davidsen T.M."/>
            <person name="Beanan M.J."/>
            <person name="DeBoy R.T."/>
            <person name="Daugherty S.C."/>
            <person name="Brinkac L.M."/>
            <person name="Madupu R."/>
            <person name="Dodson R.J."/>
            <person name="Khouri H.M."/>
            <person name="Lee K.H."/>
            <person name="Carty H.A."/>
            <person name="Scanlan D."/>
            <person name="Heinzen R.A."/>
            <person name="Thompson H.A."/>
            <person name="Samuel J.E."/>
            <person name="Fraser C.M."/>
            <person name="Heidelberg J.F."/>
        </authorList>
    </citation>
    <scope>NUCLEOTIDE SEQUENCE [LARGE SCALE GENOMIC DNA]</scope>
    <source>
        <strain>RSA 493 / Nine Mile phase I</strain>
    </source>
</reference>
<gene>
    <name type="primary">rarA</name>
    <name type="ordered locus">CBU_1189</name>
</gene>
<keyword id="KW-0067">ATP-binding</keyword>
<keyword id="KW-0235">DNA replication</keyword>
<keyword id="KW-0547">Nucleotide-binding</keyword>
<keyword id="KW-1185">Reference proteome</keyword>
<name>RARA_COXBU</name>
<comment type="function">
    <text evidence="1">DNA-dependent ATPase that plays important roles in cellular responses to stalled DNA replication processes.</text>
</comment>
<comment type="similarity">
    <text evidence="2">Belongs to the AAA ATPase family. RarA/MGS1/WRNIP1 subfamily.</text>
</comment>
<comment type="sequence caution" evidence="2">
    <conflict type="erroneous initiation">
        <sequence resource="EMBL-CDS" id="AAO90698"/>
    </conflict>
</comment>
<comment type="sequence caution" evidence="2">
    <conflict type="frameshift">
        <sequence resource="EMBL-CDS" id="CAA53291"/>
    </conflict>
</comment>
<dbReference type="EMBL" id="X75627">
    <property type="protein sequence ID" value="CAA53291.1"/>
    <property type="status" value="ALT_FRAME"/>
    <property type="molecule type" value="Genomic_DNA"/>
</dbReference>
<dbReference type="EMBL" id="AE016828">
    <property type="protein sequence ID" value="AAO90698.1"/>
    <property type="status" value="ALT_INIT"/>
    <property type="molecule type" value="Genomic_DNA"/>
</dbReference>
<dbReference type="PIR" id="S43134">
    <property type="entry name" value="S43134"/>
</dbReference>
<dbReference type="RefSeq" id="NP_820184.4">
    <property type="nucleotide sequence ID" value="NC_002971.3"/>
</dbReference>
<dbReference type="RefSeq" id="WP_010958061.1">
    <property type="nucleotide sequence ID" value="NC_002971.4"/>
</dbReference>
<dbReference type="SMR" id="P39918"/>
<dbReference type="STRING" id="227377.CBU_1189"/>
<dbReference type="EnsemblBacteria" id="AAO90698">
    <property type="protein sequence ID" value="AAO90698"/>
    <property type="gene ID" value="CBU_1189"/>
</dbReference>
<dbReference type="GeneID" id="1209093"/>
<dbReference type="KEGG" id="cbu:CBU_1189"/>
<dbReference type="PATRIC" id="fig|227377.7.peg.1187"/>
<dbReference type="eggNOG" id="COG2256">
    <property type="taxonomic scope" value="Bacteria"/>
</dbReference>
<dbReference type="HOGENOM" id="CLU_017985_0_3_6"/>
<dbReference type="OrthoDB" id="9778364at2"/>
<dbReference type="Proteomes" id="UP000002671">
    <property type="component" value="Chromosome"/>
</dbReference>
<dbReference type="GO" id="GO:0005524">
    <property type="term" value="F:ATP binding"/>
    <property type="evidence" value="ECO:0007669"/>
    <property type="project" value="UniProtKB-KW"/>
</dbReference>
<dbReference type="GO" id="GO:0016887">
    <property type="term" value="F:ATP hydrolysis activity"/>
    <property type="evidence" value="ECO:0007669"/>
    <property type="project" value="InterPro"/>
</dbReference>
<dbReference type="GO" id="GO:0003677">
    <property type="term" value="F:DNA binding"/>
    <property type="evidence" value="ECO:0007669"/>
    <property type="project" value="InterPro"/>
</dbReference>
<dbReference type="GO" id="GO:0008047">
    <property type="term" value="F:enzyme activator activity"/>
    <property type="evidence" value="ECO:0000318"/>
    <property type="project" value="GO_Central"/>
</dbReference>
<dbReference type="GO" id="GO:0017116">
    <property type="term" value="F:single-stranded DNA helicase activity"/>
    <property type="evidence" value="ECO:0000318"/>
    <property type="project" value="GO_Central"/>
</dbReference>
<dbReference type="GO" id="GO:0000731">
    <property type="term" value="P:DNA synthesis involved in DNA repair"/>
    <property type="evidence" value="ECO:0000318"/>
    <property type="project" value="GO_Central"/>
</dbReference>
<dbReference type="GO" id="GO:0006261">
    <property type="term" value="P:DNA-templated DNA replication"/>
    <property type="evidence" value="ECO:0000318"/>
    <property type="project" value="GO_Central"/>
</dbReference>
<dbReference type="CDD" id="cd00009">
    <property type="entry name" value="AAA"/>
    <property type="match status" value="1"/>
</dbReference>
<dbReference type="CDD" id="cd18139">
    <property type="entry name" value="HLD_clamp_RarA"/>
    <property type="match status" value="1"/>
</dbReference>
<dbReference type="FunFam" id="1.20.272.10:FF:000001">
    <property type="entry name" value="Putative AAA family ATPase"/>
    <property type="match status" value="1"/>
</dbReference>
<dbReference type="FunFam" id="3.40.50.300:FF:000137">
    <property type="entry name" value="Replication-associated recombination protein A"/>
    <property type="match status" value="1"/>
</dbReference>
<dbReference type="Gene3D" id="1.10.8.60">
    <property type="match status" value="1"/>
</dbReference>
<dbReference type="Gene3D" id="1.20.272.10">
    <property type="match status" value="1"/>
</dbReference>
<dbReference type="Gene3D" id="1.10.3710.10">
    <property type="entry name" value="DNA polymerase III clamp loader subunits, C-terminal domain"/>
    <property type="match status" value="1"/>
</dbReference>
<dbReference type="Gene3D" id="3.40.50.300">
    <property type="entry name" value="P-loop containing nucleotide triphosphate hydrolases"/>
    <property type="match status" value="1"/>
</dbReference>
<dbReference type="InterPro" id="IPR003593">
    <property type="entry name" value="AAA+_ATPase"/>
</dbReference>
<dbReference type="InterPro" id="IPR032423">
    <property type="entry name" value="AAA_assoc_2"/>
</dbReference>
<dbReference type="InterPro" id="IPR051314">
    <property type="entry name" value="AAA_ATPase_RarA/MGS1/WRNIP1"/>
</dbReference>
<dbReference type="InterPro" id="IPR003959">
    <property type="entry name" value="ATPase_AAA_core"/>
</dbReference>
<dbReference type="InterPro" id="IPR008921">
    <property type="entry name" value="DNA_pol3_clamp-load_cplx_C"/>
</dbReference>
<dbReference type="InterPro" id="IPR021886">
    <property type="entry name" value="MgsA_C"/>
</dbReference>
<dbReference type="InterPro" id="IPR027417">
    <property type="entry name" value="P-loop_NTPase"/>
</dbReference>
<dbReference type="PANTHER" id="PTHR13779:SF7">
    <property type="entry name" value="ATPASE WRNIP1"/>
    <property type="match status" value="1"/>
</dbReference>
<dbReference type="PANTHER" id="PTHR13779">
    <property type="entry name" value="WERNER HELICASE-INTERACTING PROTEIN 1 FAMILY MEMBER"/>
    <property type="match status" value="1"/>
</dbReference>
<dbReference type="Pfam" id="PF00004">
    <property type="entry name" value="AAA"/>
    <property type="match status" value="1"/>
</dbReference>
<dbReference type="Pfam" id="PF16193">
    <property type="entry name" value="AAA_assoc_2"/>
    <property type="match status" value="1"/>
</dbReference>
<dbReference type="Pfam" id="PF12002">
    <property type="entry name" value="MgsA_C"/>
    <property type="match status" value="1"/>
</dbReference>
<dbReference type="SMART" id="SM00382">
    <property type="entry name" value="AAA"/>
    <property type="match status" value="1"/>
</dbReference>
<dbReference type="SUPFAM" id="SSF52540">
    <property type="entry name" value="P-loop containing nucleoside triphosphate hydrolases"/>
    <property type="match status" value="1"/>
</dbReference>
<dbReference type="SUPFAM" id="SSF48019">
    <property type="entry name" value="post-AAA+ oligomerization domain-like"/>
    <property type="match status" value="1"/>
</dbReference>
<accession>P39918</accession>
<evidence type="ECO:0000250" key="1">
    <source>
        <dbReference type="UniProtKB" id="P0AAZ4"/>
    </source>
</evidence>
<evidence type="ECO:0000305" key="2"/>
<sequence length="440" mass="49135">MLSNNDFIPLATRMRPGCLEEFVGQSHLLGKDKPLFRAIEKGKLHSMILWGPPGSGKTTLAEIIAQKAGARVESISAVLAGVKDIRDVVERAERHKGQATILFVDEVHGFNKSQQDAFLPHVEKGTITLIGATTENPSFQLNNALLSRTRVYVLKQLTEADLLSILENALANEERGLGKKALEIPEPLRRRIVQFADGDARQCLNLLEIIADFALEENGRFVVDDGLIDKVLTEGLRRFDKRGEAFYDQISALHKSVRGSDPDASLYWLSRLLDGGCDPFYVARRVVRMASEDIGNADPRALQLALDAWETFERLGTPEGELAIAQAVVYCACAAKSNAVYKAFNAASREVKSTGSLEVPLYLRNAPTRLMKSLDYGKDYRYAHDESDGFAAGVDYLPESLIGRRYYFPINRGLEIKIKEKLEYYRKLNEQHKTTEDSKN</sequence>